<organism>
    <name type="scientific">Rhizobium leguminosarum bv. trifolii (strain WSM2304)</name>
    <dbReference type="NCBI Taxonomy" id="395492"/>
    <lineage>
        <taxon>Bacteria</taxon>
        <taxon>Pseudomonadati</taxon>
        <taxon>Pseudomonadota</taxon>
        <taxon>Alphaproteobacteria</taxon>
        <taxon>Hyphomicrobiales</taxon>
        <taxon>Rhizobiaceae</taxon>
        <taxon>Rhizobium/Agrobacterium group</taxon>
        <taxon>Rhizobium</taxon>
    </lineage>
</organism>
<protein>
    <recommendedName>
        <fullName evidence="1">Phosphoenolpyruvate carboxykinase (ATP)</fullName>
        <shortName evidence="1">PCK</shortName>
        <shortName evidence="1">PEP carboxykinase</shortName>
        <shortName evidence="1">PEPCK</shortName>
        <ecNumber evidence="1">4.1.1.49</ecNumber>
    </recommendedName>
</protein>
<gene>
    <name evidence="1" type="primary">pckA</name>
    <name type="ordered locus">Rleg2_3970</name>
</gene>
<reference key="1">
    <citation type="journal article" date="2010" name="Stand. Genomic Sci.">
        <title>Complete genome sequence of Rhizobium leguminosarum bv trifolii strain WSM2304, an effective microsymbiont of the South American clover Trifolium polymorphum.</title>
        <authorList>
            <person name="Reeve W."/>
            <person name="O'Hara G."/>
            <person name="Chain P."/>
            <person name="Ardley J."/>
            <person name="Brau L."/>
            <person name="Nandesena K."/>
            <person name="Tiwari R."/>
            <person name="Malfatti S."/>
            <person name="Kiss H."/>
            <person name="Lapidus A."/>
            <person name="Copeland A."/>
            <person name="Nolan M."/>
            <person name="Land M."/>
            <person name="Ivanova N."/>
            <person name="Mavromatis K."/>
            <person name="Markowitz V."/>
            <person name="Kyrpides N."/>
            <person name="Melino V."/>
            <person name="Denton M."/>
            <person name="Yates R."/>
            <person name="Howieson J."/>
        </authorList>
    </citation>
    <scope>NUCLEOTIDE SEQUENCE [LARGE SCALE GENOMIC DNA]</scope>
    <source>
        <strain>WSM2304</strain>
    </source>
</reference>
<keyword id="KW-0067">ATP-binding</keyword>
<keyword id="KW-0963">Cytoplasm</keyword>
<keyword id="KW-0210">Decarboxylase</keyword>
<keyword id="KW-0312">Gluconeogenesis</keyword>
<keyword id="KW-0456">Lyase</keyword>
<keyword id="KW-0464">Manganese</keyword>
<keyword id="KW-0479">Metal-binding</keyword>
<keyword id="KW-0547">Nucleotide-binding</keyword>
<keyword id="KW-1185">Reference proteome</keyword>
<comment type="function">
    <text evidence="1">Involved in the gluconeogenesis. Catalyzes the conversion of oxaloacetate (OAA) to phosphoenolpyruvate (PEP) through direct phosphoryl transfer between the nucleoside triphosphate and OAA.</text>
</comment>
<comment type="catalytic activity">
    <reaction evidence="1">
        <text>oxaloacetate + ATP = phosphoenolpyruvate + ADP + CO2</text>
        <dbReference type="Rhea" id="RHEA:18617"/>
        <dbReference type="ChEBI" id="CHEBI:16452"/>
        <dbReference type="ChEBI" id="CHEBI:16526"/>
        <dbReference type="ChEBI" id="CHEBI:30616"/>
        <dbReference type="ChEBI" id="CHEBI:58702"/>
        <dbReference type="ChEBI" id="CHEBI:456216"/>
        <dbReference type="EC" id="4.1.1.49"/>
    </reaction>
</comment>
<comment type="cofactor">
    <cofactor evidence="1">
        <name>Mn(2+)</name>
        <dbReference type="ChEBI" id="CHEBI:29035"/>
    </cofactor>
    <text evidence="1">Binds 1 Mn(2+) ion per subunit.</text>
</comment>
<comment type="pathway">
    <text evidence="1">Carbohydrate biosynthesis; gluconeogenesis.</text>
</comment>
<comment type="subcellular location">
    <subcellularLocation>
        <location evidence="1">Cytoplasm</location>
    </subcellularLocation>
</comment>
<comment type="similarity">
    <text evidence="1">Belongs to the phosphoenolpyruvate carboxykinase (ATP) family.</text>
</comment>
<accession>B5ZV86</accession>
<sequence length="536" mass="57521">MEMFGVHNPATELATVGLGGAASVRYNFSAAALYEESIRRGEAELTAQGALRAITGQHTGRSPRDKFVVRDSNTDGEIWWDNNKPLSPEHFALLRADMLAHAAGKDLFVQDLIGGAEEGHALPTRVVTEFAWHSLFIRNLLIRPDAAALPSFAPKLTIIDLPSFKADPARHGCRSETVIACDLTNGLVLIGGTSYAGEMKKSVFTVLNYLLPAKGVMPMHCSANVGPNGDAAVFFGLSGTGKTTLSADPARTLIGDDEHGWSENGIFNFEGGCYAKTIRLSAEAEPEIYATTQRFGTVLENVVLNERREPNFDDGSLTENTRCAYPMDFIPNASETGRAGHPKTIIMLTADAFGVMPPIARLTPDQAMYHFLSGYTAKVAGTEKGVVEPEATFSTCFGAPFMPRHPAEYGNLLKELISRHGVECWLVNTGWTGGAYGTGKRMPIKATRALLAAALTGELGQVEFRADTNFGFAVPVSVNGVDSSILDPRSTWADKAAYDAQAEKLVSMFIANFAKFEGHVDGGVRDAAPGVKVAAE</sequence>
<evidence type="ECO:0000255" key="1">
    <source>
        <dbReference type="HAMAP-Rule" id="MF_00453"/>
    </source>
</evidence>
<name>PCKA_RHILW</name>
<proteinExistence type="inferred from homology"/>
<dbReference type="EC" id="4.1.1.49" evidence="1"/>
<dbReference type="EMBL" id="CP001191">
    <property type="protein sequence ID" value="ACI57232.1"/>
    <property type="molecule type" value="Genomic_DNA"/>
</dbReference>
<dbReference type="RefSeq" id="WP_012559414.1">
    <property type="nucleotide sequence ID" value="NC_011369.1"/>
</dbReference>
<dbReference type="SMR" id="B5ZV86"/>
<dbReference type="STRING" id="395492.Rleg2_3970"/>
<dbReference type="KEGG" id="rlt:Rleg2_3970"/>
<dbReference type="eggNOG" id="COG1866">
    <property type="taxonomic scope" value="Bacteria"/>
</dbReference>
<dbReference type="HOGENOM" id="CLU_018247_0_1_5"/>
<dbReference type="UniPathway" id="UPA00138"/>
<dbReference type="Proteomes" id="UP000008330">
    <property type="component" value="Chromosome"/>
</dbReference>
<dbReference type="GO" id="GO:0005829">
    <property type="term" value="C:cytosol"/>
    <property type="evidence" value="ECO:0007669"/>
    <property type="project" value="TreeGrafter"/>
</dbReference>
<dbReference type="GO" id="GO:0005524">
    <property type="term" value="F:ATP binding"/>
    <property type="evidence" value="ECO:0007669"/>
    <property type="project" value="UniProtKB-UniRule"/>
</dbReference>
<dbReference type="GO" id="GO:0046872">
    <property type="term" value="F:metal ion binding"/>
    <property type="evidence" value="ECO:0007669"/>
    <property type="project" value="UniProtKB-KW"/>
</dbReference>
<dbReference type="GO" id="GO:0004612">
    <property type="term" value="F:phosphoenolpyruvate carboxykinase (ATP) activity"/>
    <property type="evidence" value="ECO:0007669"/>
    <property type="project" value="UniProtKB-UniRule"/>
</dbReference>
<dbReference type="GO" id="GO:0006094">
    <property type="term" value="P:gluconeogenesis"/>
    <property type="evidence" value="ECO:0007669"/>
    <property type="project" value="UniProtKB-UniRule"/>
</dbReference>
<dbReference type="CDD" id="cd00484">
    <property type="entry name" value="PEPCK_ATP"/>
    <property type="match status" value="1"/>
</dbReference>
<dbReference type="Gene3D" id="3.90.228.20">
    <property type="match status" value="1"/>
</dbReference>
<dbReference type="Gene3D" id="3.40.449.10">
    <property type="entry name" value="Phosphoenolpyruvate Carboxykinase, domain 1"/>
    <property type="match status" value="1"/>
</dbReference>
<dbReference type="Gene3D" id="2.170.8.10">
    <property type="entry name" value="Phosphoenolpyruvate Carboxykinase, domain 2"/>
    <property type="match status" value="1"/>
</dbReference>
<dbReference type="HAMAP" id="MF_00453">
    <property type="entry name" value="PEPCK_ATP"/>
    <property type="match status" value="1"/>
</dbReference>
<dbReference type="InterPro" id="IPR001272">
    <property type="entry name" value="PEP_carboxykinase_ATP"/>
</dbReference>
<dbReference type="InterPro" id="IPR013035">
    <property type="entry name" value="PEP_carboxykinase_C"/>
</dbReference>
<dbReference type="InterPro" id="IPR008210">
    <property type="entry name" value="PEP_carboxykinase_N"/>
</dbReference>
<dbReference type="InterPro" id="IPR015994">
    <property type="entry name" value="PEPCK_ATP_CS"/>
</dbReference>
<dbReference type="NCBIfam" id="TIGR00224">
    <property type="entry name" value="pckA"/>
    <property type="match status" value="1"/>
</dbReference>
<dbReference type="NCBIfam" id="NF006820">
    <property type="entry name" value="PRK09344.1-2"/>
    <property type="match status" value="1"/>
</dbReference>
<dbReference type="NCBIfam" id="NF006821">
    <property type="entry name" value="PRK09344.1-3"/>
    <property type="match status" value="1"/>
</dbReference>
<dbReference type="NCBIfam" id="NF006822">
    <property type="entry name" value="PRK09344.1-4"/>
    <property type="match status" value="1"/>
</dbReference>
<dbReference type="PANTHER" id="PTHR30031:SF0">
    <property type="entry name" value="PHOSPHOENOLPYRUVATE CARBOXYKINASE (ATP)"/>
    <property type="match status" value="1"/>
</dbReference>
<dbReference type="PANTHER" id="PTHR30031">
    <property type="entry name" value="PHOSPHOENOLPYRUVATE CARBOXYKINASE ATP"/>
    <property type="match status" value="1"/>
</dbReference>
<dbReference type="Pfam" id="PF01293">
    <property type="entry name" value="PEPCK_ATP"/>
    <property type="match status" value="1"/>
</dbReference>
<dbReference type="PIRSF" id="PIRSF006294">
    <property type="entry name" value="PEP_crbxkin"/>
    <property type="match status" value="1"/>
</dbReference>
<dbReference type="SUPFAM" id="SSF68923">
    <property type="entry name" value="PEP carboxykinase N-terminal domain"/>
    <property type="match status" value="1"/>
</dbReference>
<dbReference type="SUPFAM" id="SSF53795">
    <property type="entry name" value="PEP carboxykinase-like"/>
    <property type="match status" value="1"/>
</dbReference>
<dbReference type="PROSITE" id="PS00532">
    <property type="entry name" value="PEPCK_ATP"/>
    <property type="match status" value="1"/>
</dbReference>
<feature type="chain" id="PRO_1000192321" description="Phosphoenolpyruvate carboxykinase (ATP)">
    <location>
        <begin position="1"/>
        <end position="536"/>
    </location>
</feature>
<feature type="binding site" evidence="1">
    <location>
        <position position="61"/>
    </location>
    <ligand>
        <name>substrate</name>
    </ligand>
</feature>
<feature type="binding site" evidence="1">
    <location>
        <position position="195"/>
    </location>
    <ligand>
        <name>substrate</name>
    </ligand>
</feature>
<feature type="binding site" evidence="1">
    <location>
        <position position="201"/>
    </location>
    <ligand>
        <name>ATP</name>
        <dbReference type="ChEBI" id="CHEBI:30616"/>
    </ligand>
</feature>
<feature type="binding site" evidence="1">
    <location>
        <position position="201"/>
    </location>
    <ligand>
        <name>Mn(2+)</name>
        <dbReference type="ChEBI" id="CHEBI:29035"/>
    </ligand>
</feature>
<feature type="binding site" evidence="1">
    <location>
        <position position="201"/>
    </location>
    <ligand>
        <name>substrate</name>
    </ligand>
</feature>
<feature type="binding site" evidence="1">
    <location>
        <position position="220"/>
    </location>
    <ligand>
        <name>ATP</name>
        <dbReference type="ChEBI" id="CHEBI:30616"/>
    </ligand>
</feature>
<feature type="binding site" evidence="1">
    <location>
        <position position="220"/>
    </location>
    <ligand>
        <name>Mn(2+)</name>
        <dbReference type="ChEBI" id="CHEBI:29035"/>
    </ligand>
</feature>
<feature type="binding site" evidence="1">
    <location>
        <begin position="236"/>
        <end position="244"/>
    </location>
    <ligand>
        <name>ATP</name>
        <dbReference type="ChEBI" id="CHEBI:30616"/>
    </ligand>
</feature>
<feature type="binding site" evidence="1">
    <location>
        <position position="257"/>
    </location>
    <ligand>
        <name>Mn(2+)</name>
        <dbReference type="ChEBI" id="CHEBI:29035"/>
    </ligand>
</feature>
<feature type="binding site" evidence="1">
    <location>
        <position position="285"/>
    </location>
    <ligand>
        <name>ATP</name>
        <dbReference type="ChEBI" id="CHEBI:30616"/>
    </ligand>
</feature>
<feature type="binding site" evidence="1">
    <location>
        <position position="322"/>
    </location>
    <ligand>
        <name>ATP</name>
        <dbReference type="ChEBI" id="CHEBI:30616"/>
    </ligand>
</feature>
<feature type="binding site" evidence="1">
    <location>
        <position position="322"/>
    </location>
    <ligand>
        <name>substrate</name>
    </ligand>
</feature>
<feature type="binding site" evidence="1">
    <location>
        <position position="447"/>
    </location>
    <ligand>
        <name>ATP</name>
        <dbReference type="ChEBI" id="CHEBI:30616"/>
    </ligand>
</feature>